<accession>Q8Y9G4</accession>
<gene>
    <name type="primary">hisA</name>
    <name type="ordered locus">lmo0564</name>
</gene>
<comment type="catalytic activity">
    <reaction>
        <text>1-(5-phospho-beta-D-ribosyl)-5-[(5-phospho-beta-D-ribosylamino)methylideneamino]imidazole-4-carboxamide = 5-[(5-phospho-1-deoxy-D-ribulos-1-ylimino)methylamino]-1-(5-phospho-beta-D-ribosyl)imidazole-4-carboxamide</text>
        <dbReference type="Rhea" id="RHEA:15469"/>
        <dbReference type="ChEBI" id="CHEBI:58435"/>
        <dbReference type="ChEBI" id="CHEBI:58525"/>
        <dbReference type="EC" id="5.3.1.16"/>
    </reaction>
</comment>
<comment type="pathway">
    <text>Amino-acid biosynthesis; L-histidine biosynthesis; L-histidine from 5-phospho-alpha-D-ribose 1-diphosphate: step 4/9.</text>
</comment>
<comment type="subcellular location">
    <subcellularLocation>
        <location evidence="1">Cytoplasm</location>
    </subcellularLocation>
</comment>
<comment type="similarity">
    <text evidence="2">Belongs to the HisA/HisF family.</text>
</comment>
<keyword id="KW-0028">Amino-acid biosynthesis</keyword>
<keyword id="KW-0963">Cytoplasm</keyword>
<keyword id="KW-0368">Histidine biosynthesis</keyword>
<keyword id="KW-0413">Isomerase</keyword>
<keyword id="KW-1185">Reference proteome</keyword>
<organism>
    <name type="scientific">Listeria monocytogenes serovar 1/2a (strain ATCC BAA-679 / EGD-e)</name>
    <dbReference type="NCBI Taxonomy" id="169963"/>
    <lineage>
        <taxon>Bacteria</taxon>
        <taxon>Bacillati</taxon>
        <taxon>Bacillota</taxon>
        <taxon>Bacilli</taxon>
        <taxon>Bacillales</taxon>
        <taxon>Listeriaceae</taxon>
        <taxon>Listeria</taxon>
    </lineage>
</organism>
<evidence type="ECO:0000250" key="1"/>
<evidence type="ECO:0000305" key="2"/>
<proteinExistence type="inferred from homology"/>
<reference key="1">
    <citation type="journal article" date="2001" name="Science">
        <title>Comparative genomics of Listeria species.</title>
        <authorList>
            <person name="Glaser P."/>
            <person name="Frangeul L."/>
            <person name="Buchrieser C."/>
            <person name="Rusniok C."/>
            <person name="Amend A."/>
            <person name="Baquero F."/>
            <person name="Berche P."/>
            <person name="Bloecker H."/>
            <person name="Brandt P."/>
            <person name="Chakraborty T."/>
            <person name="Charbit A."/>
            <person name="Chetouani F."/>
            <person name="Couve E."/>
            <person name="de Daruvar A."/>
            <person name="Dehoux P."/>
            <person name="Domann E."/>
            <person name="Dominguez-Bernal G."/>
            <person name="Duchaud E."/>
            <person name="Durant L."/>
            <person name="Dussurget O."/>
            <person name="Entian K.-D."/>
            <person name="Fsihi H."/>
            <person name="Garcia-del Portillo F."/>
            <person name="Garrido P."/>
            <person name="Gautier L."/>
            <person name="Goebel W."/>
            <person name="Gomez-Lopez N."/>
            <person name="Hain T."/>
            <person name="Hauf J."/>
            <person name="Jackson D."/>
            <person name="Jones L.-M."/>
            <person name="Kaerst U."/>
            <person name="Kreft J."/>
            <person name="Kuhn M."/>
            <person name="Kunst F."/>
            <person name="Kurapkat G."/>
            <person name="Madueno E."/>
            <person name="Maitournam A."/>
            <person name="Mata Vicente J."/>
            <person name="Ng E."/>
            <person name="Nedjari H."/>
            <person name="Nordsiek G."/>
            <person name="Novella S."/>
            <person name="de Pablos B."/>
            <person name="Perez-Diaz J.-C."/>
            <person name="Purcell R."/>
            <person name="Remmel B."/>
            <person name="Rose M."/>
            <person name="Schlueter T."/>
            <person name="Simoes N."/>
            <person name="Tierrez A."/>
            <person name="Vazquez-Boland J.-A."/>
            <person name="Voss H."/>
            <person name="Wehland J."/>
            <person name="Cossart P."/>
        </authorList>
    </citation>
    <scope>NUCLEOTIDE SEQUENCE [LARGE SCALE GENOMIC DNA]</scope>
    <source>
        <strain>ATCC BAA-679 / EGD-e</strain>
    </source>
</reference>
<name>HIS4_LISMO</name>
<sequence length="240" mass="25883">MQIFPAIDLKNGQCVRLFQGDFSKKTVVNEDPIAQAKAFATDGATYLHIVDLDGALEGRPINLEVIQKMKITAKIPVQVGGGIRSMAQVDYYLESGIDRVIIGSAALTDPDFLRAAVQKYGAKIAAGIDAKNGFVATRGWLDVSQVSYLDLAKRMEKVGVETIIYTDISRDGTLTGPNLEQMANLKEHVKVNLIASGGVSSRADLEALAQLGLYGAIAGKALYNHHISMSDIVEVEQIAY</sequence>
<dbReference type="EC" id="5.3.1.16"/>
<dbReference type="EMBL" id="AL591975">
    <property type="protein sequence ID" value="CAC98643.1"/>
    <property type="molecule type" value="Genomic_DNA"/>
</dbReference>
<dbReference type="PIR" id="AE1145">
    <property type="entry name" value="AE1145"/>
</dbReference>
<dbReference type="RefSeq" id="NP_464092.1">
    <property type="nucleotide sequence ID" value="NC_003210.1"/>
</dbReference>
<dbReference type="RefSeq" id="WP_010989518.1">
    <property type="nucleotide sequence ID" value="NZ_CP149495.1"/>
</dbReference>
<dbReference type="SMR" id="Q8Y9G4"/>
<dbReference type="STRING" id="169963.gene:17593215"/>
<dbReference type="PaxDb" id="169963-lmo0564"/>
<dbReference type="EnsemblBacteria" id="CAC98643">
    <property type="protein sequence ID" value="CAC98643"/>
    <property type="gene ID" value="CAC98643"/>
</dbReference>
<dbReference type="GeneID" id="984608"/>
<dbReference type="KEGG" id="lmo:lmo0564"/>
<dbReference type="PATRIC" id="fig|169963.11.peg.583"/>
<dbReference type="eggNOG" id="COG0106">
    <property type="taxonomic scope" value="Bacteria"/>
</dbReference>
<dbReference type="HOGENOM" id="CLU_048577_1_1_9"/>
<dbReference type="OrthoDB" id="9807749at2"/>
<dbReference type="PhylomeDB" id="Q8Y9G4"/>
<dbReference type="BioCyc" id="LMON169963:LMO0564-MONOMER"/>
<dbReference type="UniPathway" id="UPA00031">
    <property type="reaction ID" value="UER00009"/>
</dbReference>
<dbReference type="Proteomes" id="UP000000817">
    <property type="component" value="Chromosome"/>
</dbReference>
<dbReference type="GO" id="GO:0005737">
    <property type="term" value="C:cytoplasm"/>
    <property type="evidence" value="ECO:0000318"/>
    <property type="project" value="GO_Central"/>
</dbReference>
<dbReference type="GO" id="GO:0003949">
    <property type="term" value="F:1-(5-phosphoribosyl)-5-[(5-phosphoribosylamino)methylideneamino]imidazole-4-carboxamide isomerase activity"/>
    <property type="evidence" value="ECO:0000318"/>
    <property type="project" value="GO_Central"/>
</dbReference>
<dbReference type="GO" id="GO:0000105">
    <property type="term" value="P:L-histidine biosynthetic process"/>
    <property type="evidence" value="ECO:0000318"/>
    <property type="project" value="GO_Central"/>
</dbReference>
<dbReference type="CDD" id="cd04732">
    <property type="entry name" value="HisA"/>
    <property type="match status" value="1"/>
</dbReference>
<dbReference type="FunFam" id="3.20.20.70:FF:000009">
    <property type="entry name" value="1-(5-phosphoribosyl)-5-[(5-phosphoribosylamino)methylideneamino] imidazole-4-carboxamide isomerase"/>
    <property type="match status" value="1"/>
</dbReference>
<dbReference type="Gene3D" id="3.20.20.70">
    <property type="entry name" value="Aldolase class I"/>
    <property type="match status" value="1"/>
</dbReference>
<dbReference type="HAMAP" id="MF_01014">
    <property type="entry name" value="HisA"/>
    <property type="match status" value="1"/>
</dbReference>
<dbReference type="InterPro" id="IPR013785">
    <property type="entry name" value="Aldolase_TIM"/>
</dbReference>
<dbReference type="InterPro" id="IPR006062">
    <property type="entry name" value="His_biosynth"/>
</dbReference>
<dbReference type="InterPro" id="IPR006063">
    <property type="entry name" value="HisA_bact_arch"/>
</dbReference>
<dbReference type="InterPro" id="IPR044524">
    <property type="entry name" value="Isoase_HisA-like"/>
</dbReference>
<dbReference type="InterPro" id="IPR023016">
    <property type="entry name" value="Isoase_HisA-like_bact"/>
</dbReference>
<dbReference type="InterPro" id="IPR011060">
    <property type="entry name" value="RibuloseP-bd_barrel"/>
</dbReference>
<dbReference type="NCBIfam" id="TIGR00007">
    <property type="entry name" value="1-(5-phosphoribosyl)-5-[(5-phosphoribosylamino)methylideneamino]imidazole-4-carboxamide isomerase"/>
    <property type="match status" value="1"/>
</dbReference>
<dbReference type="PANTHER" id="PTHR43090">
    <property type="entry name" value="1-(5-PHOSPHORIBOSYL)-5-[(5-PHOSPHORIBOSYLAMINO)METHYLIDENEAMINO] IMIDAZOLE-4-CARBOXAMIDE ISOMERASE"/>
    <property type="match status" value="1"/>
</dbReference>
<dbReference type="PANTHER" id="PTHR43090:SF2">
    <property type="entry name" value="1-(5-PHOSPHORIBOSYL)-5-[(5-PHOSPHORIBOSYLAMINO)METHYLIDENEAMINO] IMIDAZOLE-4-CARBOXAMIDE ISOMERASE"/>
    <property type="match status" value="1"/>
</dbReference>
<dbReference type="Pfam" id="PF00977">
    <property type="entry name" value="His_biosynth"/>
    <property type="match status" value="1"/>
</dbReference>
<dbReference type="SUPFAM" id="SSF51366">
    <property type="entry name" value="Ribulose-phoshate binding barrel"/>
    <property type="match status" value="1"/>
</dbReference>
<feature type="chain" id="PRO_0000142022" description="1-(5-phosphoribosyl)-5-[(5-phosphoribosylamino)methylideneamino] imidazole-4-carboxamide isomerase">
    <location>
        <begin position="1"/>
        <end position="240"/>
    </location>
</feature>
<feature type="active site" description="Proton acceptor" evidence="1">
    <location>
        <position position="8"/>
    </location>
</feature>
<feature type="active site" description="Proton donor" evidence="1">
    <location>
        <position position="129"/>
    </location>
</feature>
<protein>
    <recommendedName>
        <fullName>1-(5-phosphoribosyl)-5-[(5-phosphoribosylamino)methylideneamino] imidazole-4-carboxamide isomerase</fullName>
        <ecNumber>5.3.1.16</ecNumber>
    </recommendedName>
    <alternativeName>
        <fullName>Phosphoribosylformimino-5-aminoimidazole carboxamide ribotide isomerase</fullName>
    </alternativeName>
</protein>